<name>RL7_PROM0</name>
<accession>A3PAR9</accession>
<reference key="1">
    <citation type="journal article" date="2007" name="PLoS Genet.">
        <title>Patterns and implications of gene gain and loss in the evolution of Prochlorococcus.</title>
        <authorList>
            <person name="Kettler G.C."/>
            <person name="Martiny A.C."/>
            <person name="Huang K."/>
            <person name="Zucker J."/>
            <person name="Coleman M.L."/>
            <person name="Rodrigue S."/>
            <person name="Chen F."/>
            <person name="Lapidus A."/>
            <person name="Ferriera S."/>
            <person name="Johnson J."/>
            <person name="Steglich C."/>
            <person name="Church G.M."/>
            <person name="Richardson P."/>
            <person name="Chisholm S.W."/>
        </authorList>
    </citation>
    <scope>NUCLEOTIDE SEQUENCE [LARGE SCALE GENOMIC DNA]</scope>
    <source>
        <strain>MIT 9301</strain>
    </source>
</reference>
<protein>
    <recommendedName>
        <fullName evidence="1">Large ribosomal subunit protein bL12</fullName>
    </recommendedName>
    <alternativeName>
        <fullName evidence="2">50S ribosomal protein L7/L12</fullName>
    </alternativeName>
</protein>
<feature type="chain" id="PRO_1000007056" description="Large ribosomal subunit protein bL12">
    <location>
        <begin position="1"/>
        <end position="131"/>
    </location>
</feature>
<dbReference type="EMBL" id="CP000576">
    <property type="protein sequence ID" value="ABO16844.1"/>
    <property type="molecule type" value="Genomic_DNA"/>
</dbReference>
<dbReference type="RefSeq" id="WP_011817694.1">
    <property type="nucleotide sequence ID" value="NC_009091.1"/>
</dbReference>
<dbReference type="SMR" id="A3PAR9"/>
<dbReference type="STRING" id="167546.P9301_02211"/>
<dbReference type="KEGG" id="pmg:P9301_02211"/>
<dbReference type="eggNOG" id="COG0222">
    <property type="taxonomic scope" value="Bacteria"/>
</dbReference>
<dbReference type="HOGENOM" id="CLU_086499_3_0_3"/>
<dbReference type="OrthoDB" id="9811748at2"/>
<dbReference type="Proteomes" id="UP000001430">
    <property type="component" value="Chromosome"/>
</dbReference>
<dbReference type="GO" id="GO:0022625">
    <property type="term" value="C:cytosolic large ribosomal subunit"/>
    <property type="evidence" value="ECO:0007669"/>
    <property type="project" value="TreeGrafter"/>
</dbReference>
<dbReference type="GO" id="GO:0003729">
    <property type="term" value="F:mRNA binding"/>
    <property type="evidence" value="ECO:0007669"/>
    <property type="project" value="TreeGrafter"/>
</dbReference>
<dbReference type="GO" id="GO:0003735">
    <property type="term" value="F:structural constituent of ribosome"/>
    <property type="evidence" value="ECO:0007669"/>
    <property type="project" value="InterPro"/>
</dbReference>
<dbReference type="GO" id="GO:0006412">
    <property type="term" value="P:translation"/>
    <property type="evidence" value="ECO:0007669"/>
    <property type="project" value="UniProtKB-UniRule"/>
</dbReference>
<dbReference type="CDD" id="cd00387">
    <property type="entry name" value="Ribosomal_L7_L12"/>
    <property type="match status" value="1"/>
</dbReference>
<dbReference type="FunFam" id="3.30.1390.10:FF:000001">
    <property type="entry name" value="50S ribosomal protein L7/L12"/>
    <property type="match status" value="1"/>
</dbReference>
<dbReference type="Gene3D" id="3.30.1390.10">
    <property type="match status" value="1"/>
</dbReference>
<dbReference type="Gene3D" id="1.20.5.710">
    <property type="entry name" value="Single helix bin"/>
    <property type="match status" value="1"/>
</dbReference>
<dbReference type="HAMAP" id="MF_00368">
    <property type="entry name" value="Ribosomal_bL12"/>
    <property type="match status" value="1"/>
</dbReference>
<dbReference type="InterPro" id="IPR000206">
    <property type="entry name" value="Ribosomal_bL12"/>
</dbReference>
<dbReference type="InterPro" id="IPR013823">
    <property type="entry name" value="Ribosomal_bL12_C"/>
</dbReference>
<dbReference type="InterPro" id="IPR014719">
    <property type="entry name" value="Ribosomal_bL12_C/ClpS-like"/>
</dbReference>
<dbReference type="InterPro" id="IPR008932">
    <property type="entry name" value="Ribosomal_bL12_oligo"/>
</dbReference>
<dbReference type="InterPro" id="IPR036235">
    <property type="entry name" value="Ribosomal_bL12_oligo_N_sf"/>
</dbReference>
<dbReference type="NCBIfam" id="TIGR00855">
    <property type="entry name" value="L12"/>
    <property type="match status" value="1"/>
</dbReference>
<dbReference type="PANTHER" id="PTHR45987">
    <property type="entry name" value="39S RIBOSOMAL PROTEIN L12"/>
    <property type="match status" value="1"/>
</dbReference>
<dbReference type="PANTHER" id="PTHR45987:SF4">
    <property type="entry name" value="LARGE RIBOSOMAL SUBUNIT PROTEIN BL12M"/>
    <property type="match status" value="1"/>
</dbReference>
<dbReference type="Pfam" id="PF00542">
    <property type="entry name" value="Ribosomal_L12"/>
    <property type="match status" value="1"/>
</dbReference>
<dbReference type="Pfam" id="PF16320">
    <property type="entry name" value="Ribosomal_L12_N"/>
    <property type="match status" value="1"/>
</dbReference>
<dbReference type="SUPFAM" id="SSF54736">
    <property type="entry name" value="ClpS-like"/>
    <property type="match status" value="1"/>
</dbReference>
<dbReference type="SUPFAM" id="SSF48300">
    <property type="entry name" value="Ribosomal protein L7/12, oligomerisation (N-terminal) domain"/>
    <property type="match status" value="1"/>
</dbReference>
<keyword id="KW-1185">Reference proteome</keyword>
<keyword id="KW-0687">Ribonucleoprotein</keyword>
<keyword id="KW-0689">Ribosomal protein</keyword>
<gene>
    <name evidence="1" type="primary">rplL</name>
    <name evidence="1" type="synonym">rpl12</name>
    <name type="ordered locus">P9301_02211</name>
</gene>
<comment type="function">
    <text evidence="1">Forms part of the ribosomal stalk which helps the ribosome interact with GTP-bound translation factors. Is thus essential for accurate translation.</text>
</comment>
<comment type="subunit">
    <text evidence="1">Homodimer. Part of the ribosomal stalk of the 50S ribosomal subunit. Forms a multimeric L10(L12)X complex, where L10 forms an elongated spine to which 2 to 4 L12 dimers bind in a sequential fashion. Binds GTP-bound translation factors.</text>
</comment>
<comment type="similarity">
    <text evidence="1">Belongs to the bacterial ribosomal protein bL12 family.</text>
</comment>
<proteinExistence type="inferred from homology"/>
<sequence length="131" mass="13244">MSAKTEEILESLKSLSLLEASELVKQIEEAFGVSAAASAGVVMAAPGAAGGDADGGAAEEKTEFDVVLESFDAAAKIKVLKVVRNATGLGLGDAKALVESAPKTVKEGIAKADAESLKKEIEEAGGKVTLK</sequence>
<evidence type="ECO:0000255" key="1">
    <source>
        <dbReference type="HAMAP-Rule" id="MF_00368"/>
    </source>
</evidence>
<evidence type="ECO:0000305" key="2"/>
<organism>
    <name type="scientific">Prochlorococcus marinus (strain MIT 9301)</name>
    <dbReference type="NCBI Taxonomy" id="167546"/>
    <lineage>
        <taxon>Bacteria</taxon>
        <taxon>Bacillati</taxon>
        <taxon>Cyanobacteriota</taxon>
        <taxon>Cyanophyceae</taxon>
        <taxon>Synechococcales</taxon>
        <taxon>Prochlorococcaceae</taxon>
        <taxon>Prochlorococcus</taxon>
    </lineage>
</organism>